<dbReference type="EC" id="2.7.7.48" evidence="2"/>
<dbReference type="EC" id="3.6.1.-" evidence="1"/>
<dbReference type="EC" id="2.7.7.88" evidence="1"/>
<dbReference type="EC" id="2.1.1.375" evidence="1"/>
<dbReference type="EMBL" id="AB011257">
    <property type="protein sequence ID" value="BAA25160.1"/>
    <property type="molecule type" value="Genomic_RNA"/>
</dbReference>
<dbReference type="RefSeq" id="NP_620502.1">
    <property type="nucleotide sequence ID" value="NC_003746.1"/>
</dbReference>
<dbReference type="SMR" id="O10378"/>
<dbReference type="GeneID" id="944307"/>
<dbReference type="KEGG" id="vg:944307"/>
<dbReference type="Proteomes" id="UP000002325">
    <property type="component" value="Genome"/>
</dbReference>
<dbReference type="GO" id="GO:0030430">
    <property type="term" value="C:host cell cytoplasm"/>
    <property type="evidence" value="ECO:0007669"/>
    <property type="project" value="UniProtKB-SubCell"/>
</dbReference>
<dbReference type="GO" id="GO:0044423">
    <property type="term" value="C:virion component"/>
    <property type="evidence" value="ECO:0007669"/>
    <property type="project" value="UniProtKB-KW"/>
</dbReference>
<dbReference type="GO" id="GO:0005524">
    <property type="term" value="F:ATP binding"/>
    <property type="evidence" value="ECO:0007669"/>
    <property type="project" value="UniProtKB-KW"/>
</dbReference>
<dbReference type="GO" id="GO:0003924">
    <property type="term" value="F:GTPase activity"/>
    <property type="evidence" value="ECO:0007669"/>
    <property type="project" value="RHEA"/>
</dbReference>
<dbReference type="GO" id="GO:0004482">
    <property type="term" value="F:mRNA 5'-cap (guanine-N7-)-methyltransferase activity"/>
    <property type="evidence" value="ECO:0007669"/>
    <property type="project" value="InterPro"/>
</dbReference>
<dbReference type="GO" id="GO:0003968">
    <property type="term" value="F:RNA-directed RNA polymerase activity"/>
    <property type="evidence" value="ECO:0007669"/>
    <property type="project" value="UniProtKB-KW"/>
</dbReference>
<dbReference type="InterPro" id="IPR039736">
    <property type="entry name" value="L_poly_C"/>
</dbReference>
<dbReference type="InterPro" id="IPR026890">
    <property type="entry name" value="Mononeg_mRNAcap"/>
</dbReference>
<dbReference type="InterPro" id="IPR014023">
    <property type="entry name" value="Mononeg_RNA_pol_cat"/>
</dbReference>
<dbReference type="NCBIfam" id="TIGR04198">
    <property type="entry name" value="paramyx_RNAcap"/>
    <property type="match status" value="1"/>
</dbReference>
<dbReference type="Pfam" id="PF14318">
    <property type="entry name" value="Mononeg_mRNAcap"/>
    <property type="match status" value="1"/>
</dbReference>
<dbReference type="Pfam" id="PF00946">
    <property type="entry name" value="Mononeg_RNA_pol"/>
    <property type="match status" value="1"/>
</dbReference>
<dbReference type="PROSITE" id="PS50526">
    <property type="entry name" value="RDRP_SSRNA_NEG_NONSEG"/>
    <property type="match status" value="1"/>
</dbReference>
<comment type="function">
    <text evidence="1">RNA-directed RNA polymerase that catalyzes the transcription of viral mRNAs, their capping and polyadenylation. The template is composed of the viral RNA tightly encapsidated by the nucleoprotein (N). The viral polymerase binds to the genomic RNA at the 3' leader promoter, and transcribes subsequently all viral mRNAs with a decreasing efficiency. The first gene is the most transcribed, and the last the least transcribed. The viral phosphoprotein acts as a processivity factor. Capping is concomitant with initiation of mRNA transcription. Indeed, a GDP polyribonucleotidyl transferase (PRNTase) adds the cap structure when the nascent RNA chain length has reached few nucleotides. Ribose 2'-O methylation of viral mRNA cap precedes and facilitates subsequent guanine-N-7 methylation, both activities being carried by the viral polymerase. Polyadenylation of mRNAs occur by a stuttering mechanism at a slipery stop site present at the end viral genes. After finishing transcription of a mRNA, the polymerase can resume transcription of the downstream gene.</text>
</comment>
<comment type="function">
    <text evidence="1">RNA-directed RNA polymerase that catalyzes the replication of viral genomic RNA. The template is composed of the viral RNA tightly encapsidated by the nucleoprotein (N). The replicase mode is dependent on intracellular N protein concentration. In this mode, the polymerase replicates the whole viral genome without recognizing transcriptional signals, and the replicated genome is not caped or polyadenylated.</text>
</comment>
<comment type="catalytic activity">
    <reaction evidence="3">
        <text>RNA(n) + a ribonucleoside 5'-triphosphate = RNA(n+1) + diphosphate</text>
        <dbReference type="Rhea" id="RHEA:21248"/>
        <dbReference type="Rhea" id="RHEA-COMP:14527"/>
        <dbReference type="Rhea" id="RHEA-COMP:17342"/>
        <dbReference type="ChEBI" id="CHEBI:33019"/>
        <dbReference type="ChEBI" id="CHEBI:61557"/>
        <dbReference type="ChEBI" id="CHEBI:140395"/>
        <dbReference type="EC" id="2.7.7.48"/>
    </reaction>
</comment>
<comment type="catalytic activity">
    <reaction evidence="1">
        <text>a 5'-end (5'-triphosphoguanosine)-adenylyl-adenylyl-cytidylyl-adenosine in mRNA + 2 S-adenosyl-L-methionine = a 5'-end (N(7)-methyl 5'-triphosphoguanosine)-(2'-O-methyladenylyl)-adenylyl-cytidylyl-adenosine in mRNA + 2 S-adenosyl-L-homocysteine + H(+)</text>
        <dbReference type="Rhea" id="RHEA:65376"/>
        <dbReference type="Rhea" id="RHEA-COMP:16797"/>
        <dbReference type="Rhea" id="RHEA-COMP:16798"/>
        <dbReference type="ChEBI" id="CHEBI:15378"/>
        <dbReference type="ChEBI" id="CHEBI:57856"/>
        <dbReference type="ChEBI" id="CHEBI:59789"/>
        <dbReference type="ChEBI" id="CHEBI:156483"/>
        <dbReference type="ChEBI" id="CHEBI:156484"/>
        <dbReference type="EC" id="2.1.1.375"/>
    </reaction>
</comment>
<comment type="catalytic activity">
    <reaction evidence="1">
        <text>a 5'-end (5'-triphosphoguanosine)-adenylyl-adenylyl-cytidylyl-adenosine in mRNA + S-adenosyl-L-methionine = a 5'-end (5'-triphosphoguanosine)-(2'-O-methyladenylyl)-adenylyl-cytidylyl-adenosine in mRNA + S-adenosyl-L-homocysteine + H(+)</text>
        <dbReference type="Rhea" id="RHEA:65380"/>
        <dbReference type="Rhea" id="RHEA-COMP:16797"/>
        <dbReference type="Rhea" id="RHEA-COMP:16801"/>
        <dbReference type="ChEBI" id="CHEBI:15378"/>
        <dbReference type="ChEBI" id="CHEBI:57856"/>
        <dbReference type="ChEBI" id="CHEBI:59789"/>
        <dbReference type="ChEBI" id="CHEBI:156482"/>
        <dbReference type="ChEBI" id="CHEBI:156484"/>
    </reaction>
</comment>
<comment type="catalytic activity">
    <reaction evidence="2">
        <text>a 5'-end triphospho-adenylyl-adenylyl-cytidylyl-adenosine in mRNA + GDP + H(+) = a 5'-end (5'-triphosphoguanosine)-adenylyl-adenylyl-cytidylyl-adenosine in mRNA + diphosphate</text>
        <dbReference type="Rhea" id="RHEA:65436"/>
        <dbReference type="Rhea" id="RHEA-COMP:16797"/>
        <dbReference type="Rhea" id="RHEA-COMP:16799"/>
        <dbReference type="ChEBI" id="CHEBI:15378"/>
        <dbReference type="ChEBI" id="CHEBI:33019"/>
        <dbReference type="ChEBI" id="CHEBI:58189"/>
        <dbReference type="ChEBI" id="CHEBI:156484"/>
        <dbReference type="ChEBI" id="CHEBI:156503"/>
        <dbReference type="EC" id="2.7.7.88"/>
    </reaction>
</comment>
<comment type="catalytic activity">
    <reaction evidence="1">
        <text>a 5'-end (5'-triphosphoguanosine)-(2'-O-methyladenylyl)-adenylyl-cytidylyl-adenosine in mRNA + S-adenosyl-L-methionine = a 5'-end (N(7)-methyl 5'-triphosphoguanosine)-(2'-O-methyladenylyl)-adenylyl-cytidylyl-adenosine in mRNA + S-adenosyl-L-homocysteine</text>
        <dbReference type="Rhea" id="RHEA:65440"/>
        <dbReference type="Rhea" id="RHEA-COMP:16798"/>
        <dbReference type="Rhea" id="RHEA-COMP:16801"/>
        <dbReference type="ChEBI" id="CHEBI:57856"/>
        <dbReference type="ChEBI" id="CHEBI:59789"/>
        <dbReference type="ChEBI" id="CHEBI:156482"/>
        <dbReference type="ChEBI" id="CHEBI:156483"/>
    </reaction>
</comment>
<comment type="catalytic activity">
    <reaction evidence="2">
        <text>GTP + H2O = GDP + phosphate + H(+)</text>
        <dbReference type="Rhea" id="RHEA:19669"/>
        <dbReference type="ChEBI" id="CHEBI:15377"/>
        <dbReference type="ChEBI" id="CHEBI:15378"/>
        <dbReference type="ChEBI" id="CHEBI:37565"/>
        <dbReference type="ChEBI" id="CHEBI:43474"/>
        <dbReference type="ChEBI" id="CHEBI:58189"/>
    </reaction>
</comment>
<comment type="subunit">
    <text evidence="1">May form homodimer. Interacts with the P protein.</text>
</comment>
<comment type="subcellular location">
    <subcellularLocation>
        <location evidence="1">Virion</location>
    </subcellularLocation>
    <subcellularLocation>
        <location evidence="1">Host cytoplasm</location>
    </subcellularLocation>
    <text evidence="1">L and P are packaged asymmetrically towards the blunt end of the virus.</text>
</comment>
<comment type="similarity">
    <text evidence="4">Belongs to the rhabdoviridae protein L family.</text>
</comment>
<accession>O10378</accession>
<feature type="chain" id="PRO_0000297839" description="RNA-directed RNA polymerase L">
    <location>
        <begin position="1"/>
        <end position="1967"/>
    </location>
</feature>
<feature type="domain" description="RdRp catalytic" evidence="3">
    <location>
        <begin position="604"/>
        <end position="790"/>
    </location>
</feature>
<sequence>MDDEGHGYWQDYDEDESWLDAENDVFDDDIFEEAEDNEHLVEGGDFHLKSALRGEADMLTNPIYEKEREKLQEDVGDLGVALGHLNVRPFLEKMGERISTDHTNTPLIENIKQGGFGAIHHMKSTARLIVAEAATVTETMLTSGVDTTLAGAYHFFEQNHPHMKCTVNMVLMFLTILNNVKNIRLNVDLHQILKNNISIKGSTVCMYITVATVAYFSTDIVVFDIDGQKYNTPKTYFLNACDKIQERFNVILYSYLAEGLSIPGSPPTYIVNRIIDWGDSILYQMGNDGYDVIALYEATVVGVILSRDDKDLSPTSGGGDFLENIQQDLGPVQQNHIRYLIALLHDMTPHQLADLHGLYRIWAHPIIDIDGGVKKLQKVTQSLKGDINSKPESQETVRSFRRLFVMDYFVKHQFYPPITLPEKSNCYIGNCIRTSKKIDESHINYNFSDWDLVELGGAFSIPYSWNVLHLAKDKAISPTRSEMYTMLCKTKRVFNAELRRGVLKLMNTTLTPLREFLTEVAEHGLDIDDCIIGLFPKERELKIMARFFALLSFKMRLYFTATEELLGSKLLRYFPQITMSSNLLDMQEKMSSMSRDLESQNKSVTYVINMDFVKWNQQMRESTCEGFLKNWSKLFGLPGLYSRSHQIFRDSILYIADGTRDLTPDPDTGIMVDNNVCWIDDGAGKEGIRQKAWTIMTVCDIAAVARHHPGVFHLVGGGDNQVLTVTYHTNQIDTDGNITEEGKSKIKAKVKKFIEALETHFAARGLPLKTSETWCSTSLFMYNKFMYYKGVPLRSPLKQVSRLFPYSNNTSMTLQSMAQCLGTGLRSAAQKEVSHIALLFMRNIWGSVLGWIILYCHPMLPSISSETCNSGVSTIVRGRKAINMKTHRIDLVALILKILYLPGQLGGPGLVNIYQMTMRGFPDPVTEAICFLRKFKNYLICVGSSYSSHLARMAGVSFSASRSYEPLIEDVCSLNLDTPRSGTGGKREVPRKILLKSRLGGNQHLKELLGIMKGPSEGEFYRAISSGKVLDVRVMHEITSSTLYAVTNTFTSRVDKTATLKRLTFKFSMLESLADAELKYIRYLSVRDDKTHDIMFDGCSRIIADECRTKGWGKPVLGVTVPTPFEYLQISWTDEHICDNNHITVRISNQDRQVTTETLGPCKPYLGAYTKEKFKMTEVAAAYGDEDVLSKSLRILKIINWRYQDGSTMSEIIKAPFRAVTDIDPQRMVQESTVTKGDYDHRRKMDARVHGGIPNFVTTPLSHISISTSTWYKHARGKNENIHFQACIIQTMYQIIIRTMSNIHSQEKLHVHECCQTSISEIQEPRANLDLTTPQMIPTFPTLMGNPLVYIPEQSITFDYSRTQEVDYSRRVGSLDCQRSTDYGWVDAYSSLSWLIMCDVIGWTKMPDSFYIMQQERVDHYLLSMYIISIWKVLKSEFDLHKTMLDWGPLLKVYSSDTGVQVLSQSMGIVVLGKLEGGLSVNMMDICNSLTGLTSNQIPPFSVNLALPRIHKQVATWWKLTCSDTMYCIQCSNILKGYWEGTLINTRIDNDLRCSECADGGISPRIVNAHISNLSDHLIKIIPDREEVQLPLLAGGEDLNNLEVVLSLEDEWPDSDDITILNRIGEMNDIDGRMKNYLEVMALLNPDVVIIRPEILELEILRRVCEVVRLASEGKLIIHILVEEPSYLESGAIYEMERAFPRHNLFHVQFSFRKPPEGLHKLWLLPQDITLARADVGDWLVIPFTQLLDFHDTITPDTRLHHQREAIRQDVFWSTKEQGGLGLVVLQHICTKTELSYRLDRSKVDVEINKMMIKDPVMGGKYVILKRRCSWAIFSTKYELLCSAERIKGNLSADGKKITSKDFSRTYKEDIIIFIISVLMRSLDCDEKRVMTLSYVECLPELLTLKPRFNKSGVISVRYLDYFWFFKRVYSYNNPEVAIPYSAVIKGVNLGSPRKEGYSLASSDGAP</sequence>
<gene>
    <name type="primary">L</name>
</gene>
<proteinExistence type="inferred from homology"/>
<keyword id="KW-0067">ATP-binding</keyword>
<keyword id="KW-1035">Host cytoplasm</keyword>
<keyword id="KW-0378">Hydrolase</keyword>
<keyword id="KW-0489">Methyltransferase</keyword>
<keyword id="KW-0506">mRNA capping</keyword>
<keyword id="KW-0507">mRNA processing</keyword>
<keyword id="KW-0511">Multifunctional enzyme</keyword>
<keyword id="KW-0547">Nucleotide-binding</keyword>
<keyword id="KW-0548">Nucleotidyltransferase</keyword>
<keyword id="KW-1185">Reference proteome</keyword>
<keyword id="KW-0696">RNA-directed RNA polymerase</keyword>
<keyword id="KW-0949">S-adenosyl-L-methionine</keyword>
<keyword id="KW-0808">Transferase</keyword>
<keyword id="KW-0693">Viral RNA replication</keyword>
<keyword id="KW-0946">Virion</keyword>
<protein>
    <recommendedName>
        <fullName>RNA-directed RNA polymerase L</fullName>
        <shortName>Protein L</shortName>
    </recommendedName>
    <alternativeName>
        <fullName>Large structural protein</fullName>
    </alternativeName>
    <alternativeName>
        <fullName>Replicase</fullName>
    </alternativeName>
    <alternativeName>
        <fullName>Transcriptase</fullName>
    </alternativeName>
    <domain>
        <recommendedName>
            <fullName>RNA-directed RNA polymerase</fullName>
            <ecNumber evidence="2">2.7.7.48</ecNumber>
        </recommendedName>
    </domain>
    <domain>
        <recommendedName>
            <fullName evidence="1">GTP phosphohydrolase</fullName>
            <ecNumber evidence="1">3.6.1.-</ecNumber>
        </recommendedName>
    </domain>
    <domain>
        <recommendedName>
            <fullName evidence="4">GDP polyribonucleotidyltransferase</fullName>
            <ecNumber evidence="1">2.7.7.88</ecNumber>
        </recommendedName>
        <alternativeName>
            <fullName evidence="4">PRNTase</fullName>
        </alternativeName>
    </domain>
    <domain>
        <recommendedName>
            <fullName evidence="4">mRNA cap methyltransferase</fullName>
            <ecNumber evidence="1">2.1.1.375</ecNumber>
        </recommendedName>
        <alternativeName>
            <fullName evidence="1">mRNA (guanine-N(7)-)-methyltransferase</fullName>
            <shortName evidence="1">G-N7-MTase</shortName>
        </alternativeName>
        <alternativeName>
            <fullName evidence="1">mRNA (nucleoside-2'-O-)-methyltransferase</fullName>
            <shortName evidence="1">N1-2'-O-MTase</shortName>
        </alternativeName>
    </domain>
</protein>
<organismHost>
    <name type="scientific">Oryza sativa</name>
    <name type="common">Rice</name>
    <dbReference type="NCBI Taxonomy" id="4530"/>
</organismHost>
<evidence type="ECO:0000250" key="1">
    <source>
        <dbReference type="UniProtKB" id="P03523"/>
    </source>
</evidence>
<evidence type="ECO:0000250" key="2">
    <source>
        <dbReference type="UniProtKB" id="P28887"/>
    </source>
</evidence>
<evidence type="ECO:0000255" key="3">
    <source>
        <dbReference type="PROSITE-ProRule" id="PRU00539"/>
    </source>
</evidence>
<evidence type="ECO:0000305" key="4"/>
<reference key="1">
    <citation type="journal article" date="2003" name="J. Gen. Virol.">
        <title>Novel structure of the genome of Rice yellow stunt virus: identification of the gene 6-encoded virion protein.</title>
        <authorList>
            <person name="Huang Y."/>
            <person name="Zhao H."/>
            <person name="Luo Z."/>
            <person name="Chen X."/>
            <person name="Fang R.X."/>
        </authorList>
    </citation>
    <scope>NUCLEOTIDE SEQUENCE [GENOMIC RNA]</scope>
</reference>
<name>L_RYSV</name>
<organism>
    <name type="scientific">Rice yellow stunt virus</name>
    <name type="common">RYSV</name>
    <name type="synonym">Rice transitory yellowing virus</name>
    <dbReference type="NCBI Taxonomy" id="59380"/>
    <lineage>
        <taxon>Viruses</taxon>
        <taxon>Riboviria</taxon>
        <taxon>Orthornavirae</taxon>
        <taxon>Negarnaviricota</taxon>
        <taxon>Haploviricotina</taxon>
        <taxon>Monjiviricetes</taxon>
        <taxon>Mononegavirales</taxon>
        <taxon>Rhabdoviridae</taxon>
        <taxon>Betarhabdovirinae</taxon>
        <taxon>Alphanucleorhabdovirus</taxon>
        <taxon>Alphanucleorhabdovirus oryzae</taxon>
    </lineage>
</organism>